<feature type="chain" id="PRO_1000003282" description="Ribosome-recycling factor">
    <location>
        <begin position="1"/>
        <end position="185"/>
    </location>
</feature>
<keyword id="KW-0963">Cytoplasm</keyword>
<keyword id="KW-0648">Protein biosynthesis</keyword>
<keyword id="KW-1185">Reference proteome</keyword>
<comment type="function">
    <text evidence="1">Responsible for the release of ribosomes from messenger RNA at the termination of protein biosynthesis. May increase the efficiency of translation by recycling ribosomes from one round of translation to another.</text>
</comment>
<comment type="subcellular location">
    <subcellularLocation>
        <location evidence="1">Cytoplasm</location>
    </subcellularLocation>
</comment>
<comment type="similarity">
    <text evidence="1">Belongs to the RRF family.</text>
</comment>
<gene>
    <name evidence="1" type="primary">frr</name>
    <name type="ordered locus">SPD_0835</name>
</gene>
<organism>
    <name type="scientific">Streptococcus pneumoniae serotype 2 (strain D39 / NCTC 7466)</name>
    <dbReference type="NCBI Taxonomy" id="373153"/>
    <lineage>
        <taxon>Bacteria</taxon>
        <taxon>Bacillati</taxon>
        <taxon>Bacillota</taxon>
        <taxon>Bacilli</taxon>
        <taxon>Lactobacillales</taxon>
        <taxon>Streptococcaceae</taxon>
        <taxon>Streptococcus</taxon>
    </lineage>
</organism>
<sequence length="185" mass="20643">MANVIIEKAKERMTQSHQSLAREFGGIRAGRANASLLDRVHVEYYGVETPLNQIASITIPEARVLLVTPFDKSSLKDIDRALNASDLGITPANDGSVIRLVIPALTEETRRDLAKEVKKVGENAKVAVRNIRRDAMDEAKKQEKAKEITEDELKTLEKDIQKVTDDAVKHIDDMTANKEKELLEV</sequence>
<reference key="1">
    <citation type="journal article" date="2007" name="J. Bacteriol.">
        <title>Genome sequence of Avery's virulent serotype 2 strain D39 of Streptococcus pneumoniae and comparison with that of unencapsulated laboratory strain R6.</title>
        <authorList>
            <person name="Lanie J.A."/>
            <person name="Ng W.-L."/>
            <person name="Kazmierczak K.M."/>
            <person name="Andrzejewski T.M."/>
            <person name="Davidsen T.M."/>
            <person name="Wayne K.J."/>
            <person name="Tettelin H."/>
            <person name="Glass J.I."/>
            <person name="Winkler M.E."/>
        </authorList>
    </citation>
    <scope>NUCLEOTIDE SEQUENCE [LARGE SCALE GENOMIC DNA]</scope>
    <source>
        <strain>D39 / NCTC 7466</strain>
    </source>
</reference>
<proteinExistence type="inferred from homology"/>
<dbReference type="EMBL" id="CP000410">
    <property type="protein sequence ID" value="ABJ55153.1"/>
    <property type="molecule type" value="Genomic_DNA"/>
</dbReference>
<dbReference type="RefSeq" id="WP_000024408.1">
    <property type="nucleotide sequence ID" value="NZ_JAMLJR010000004.1"/>
</dbReference>
<dbReference type="SMR" id="Q04KY0"/>
<dbReference type="PaxDb" id="373153-SPD_0835"/>
<dbReference type="KEGG" id="spd:SPD_0835"/>
<dbReference type="eggNOG" id="COG0233">
    <property type="taxonomic scope" value="Bacteria"/>
</dbReference>
<dbReference type="HOGENOM" id="CLU_073981_2_0_9"/>
<dbReference type="BioCyc" id="SPNE373153:G1G6V-914-MONOMER"/>
<dbReference type="Proteomes" id="UP000001452">
    <property type="component" value="Chromosome"/>
</dbReference>
<dbReference type="GO" id="GO:0005737">
    <property type="term" value="C:cytoplasm"/>
    <property type="evidence" value="ECO:0007669"/>
    <property type="project" value="UniProtKB-SubCell"/>
</dbReference>
<dbReference type="GO" id="GO:0043023">
    <property type="term" value="F:ribosomal large subunit binding"/>
    <property type="evidence" value="ECO:0007669"/>
    <property type="project" value="TreeGrafter"/>
</dbReference>
<dbReference type="GO" id="GO:0006415">
    <property type="term" value="P:translational termination"/>
    <property type="evidence" value="ECO:0007669"/>
    <property type="project" value="UniProtKB-UniRule"/>
</dbReference>
<dbReference type="CDD" id="cd00520">
    <property type="entry name" value="RRF"/>
    <property type="match status" value="1"/>
</dbReference>
<dbReference type="FunFam" id="1.10.132.20:FF:000001">
    <property type="entry name" value="Ribosome-recycling factor"/>
    <property type="match status" value="1"/>
</dbReference>
<dbReference type="FunFam" id="3.30.1360.40:FF:000001">
    <property type="entry name" value="Ribosome-recycling factor"/>
    <property type="match status" value="1"/>
</dbReference>
<dbReference type="Gene3D" id="3.30.1360.40">
    <property type="match status" value="1"/>
</dbReference>
<dbReference type="Gene3D" id="1.10.132.20">
    <property type="entry name" value="Ribosome-recycling factor"/>
    <property type="match status" value="1"/>
</dbReference>
<dbReference type="HAMAP" id="MF_00040">
    <property type="entry name" value="RRF"/>
    <property type="match status" value="1"/>
</dbReference>
<dbReference type="InterPro" id="IPR002661">
    <property type="entry name" value="Ribosome_recyc_fac"/>
</dbReference>
<dbReference type="InterPro" id="IPR023584">
    <property type="entry name" value="Ribosome_recyc_fac_dom"/>
</dbReference>
<dbReference type="InterPro" id="IPR036191">
    <property type="entry name" value="RRF_sf"/>
</dbReference>
<dbReference type="NCBIfam" id="TIGR00496">
    <property type="entry name" value="frr"/>
    <property type="match status" value="1"/>
</dbReference>
<dbReference type="PANTHER" id="PTHR20982:SF3">
    <property type="entry name" value="MITOCHONDRIAL RIBOSOME RECYCLING FACTOR PSEUDO 1"/>
    <property type="match status" value="1"/>
</dbReference>
<dbReference type="PANTHER" id="PTHR20982">
    <property type="entry name" value="RIBOSOME RECYCLING FACTOR"/>
    <property type="match status" value="1"/>
</dbReference>
<dbReference type="Pfam" id="PF01765">
    <property type="entry name" value="RRF"/>
    <property type="match status" value="1"/>
</dbReference>
<dbReference type="SUPFAM" id="SSF55194">
    <property type="entry name" value="Ribosome recycling factor, RRF"/>
    <property type="match status" value="1"/>
</dbReference>
<evidence type="ECO:0000255" key="1">
    <source>
        <dbReference type="HAMAP-Rule" id="MF_00040"/>
    </source>
</evidence>
<name>RRF_STRP2</name>
<protein>
    <recommendedName>
        <fullName evidence="1">Ribosome-recycling factor</fullName>
        <shortName evidence="1">RRF</shortName>
    </recommendedName>
    <alternativeName>
        <fullName evidence="1">Ribosome-releasing factor</fullName>
    </alternativeName>
</protein>
<accession>Q04KY0</accession>